<sequence>MGNSASRSDFEWVYTDQPHTQRRKEILAKYPAIKALMRPDPRLKWAVLVLVLVQMLACWLVRGLAWRWLLFWAYAFGGCVNHSLTLAIHDISHNAAFGTGRAARNRWLAVFANLPVGVPYAASFKKYHVDHHRYLGGDGLDVDVPTRLEGWFFCTPARKLLWLVLQPFFYSLRPLCVHPKAVTRMEVLNTLVQLAADLAIFALWGLKPVVYLLASSFLGLGLHPISGHFVAEHYMFLKGHETYSYYGPLNWITFNVGYHVEHHDFPSIPGYNLPLVRKIAPEYYDHLPQHHSWVKVLWDFVFEDSLGPYARVKRVYRLAKDGL</sequence>
<gene>
    <name evidence="11" type="primary">DEGS2</name>
    <name type="synonym">C14orf66</name>
</gene>
<reference key="1">
    <citation type="journal article" date="2004" name="FEBS Lett.">
        <title>Identification of the human sphingolipid C4-hydroxylase, hDES2, and its up-regulation during keratinocyte differentiation.</title>
        <authorList>
            <person name="Mizutani Y."/>
            <person name="Kihara A."/>
            <person name="Igarashi Y."/>
        </authorList>
    </citation>
    <scope>NUCLEOTIDE SEQUENCE [MRNA]</scope>
    <scope>CATALYTIC ACTIVITY</scope>
    <scope>TISSUE SPECIFICITY</scope>
    <scope>INDUCTION</scope>
    <scope>VARIANT ASN-8</scope>
    <source>
        <tissue evidence="10">Skin</tissue>
    </source>
</reference>
<reference key="2">
    <citation type="journal article" date="2003" name="Nature">
        <title>The DNA sequence and analysis of human chromosome 14.</title>
        <authorList>
            <person name="Heilig R."/>
            <person name="Eckenberg R."/>
            <person name="Petit J.-L."/>
            <person name="Fonknechten N."/>
            <person name="Da Silva C."/>
            <person name="Cattolico L."/>
            <person name="Levy M."/>
            <person name="Barbe V."/>
            <person name="De Berardinis V."/>
            <person name="Ureta-Vidal A."/>
            <person name="Pelletier E."/>
            <person name="Vico V."/>
            <person name="Anthouard V."/>
            <person name="Rowen L."/>
            <person name="Madan A."/>
            <person name="Qin S."/>
            <person name="Sun H."/>
            <person name="Du H."/>
            <person name="Pepin K."/>
            <person name="Artiguenave F."/>
            <person name="Robert C."/>
            <person name="Cruaud C."/>
            <person name="Bruels T."/>
            <person name="Jaillon O."/>
            <person name="Friedlander L."/>
            <person name="Samson G."/>
            <person name="Brottier P."/>
            <person name="Cure S."/>
            <person name="Segurens B."/>
            <person name="Aniere F."/>
            <person name="Samain S."/>
            <person name="Crespeau H."/>
            <person name="Abbasi N."/>
            <person name="Aiach N."/>
            <person name="Boscus D."/>
            <person name="Dickhoff R."/>
            <person name="Dors M."/>
            <person name="Dubois I."/>
            <person name="Friedman C."/>
            <person name="Gouyvenoux M."/>
            <person name="James R."/>
            <person name="Madan A."/>
            <person name="Mairey-Estrada B."/>
            <person name="Mangenot S."/>
            <person name="Martins N."/>
            <person name="Menard M."/>
            <person name="Oztas S."/>
            <person name="Ratcliffe A."/>
            <person name="Shaffer T."/>
            <person name="Trask B."/>
            <person name="Vacherie B."/>
            <person name="Bellemere C."/>
            <person name="Belser C."/>
            <person name="Besnard-Gonnet M."/>
            <person name="Bartol-Mavel D."/>
            <person name="Boutard M."/>
            <person name="Briez-Silla S."/>
            <person name="Combette S."/>
            <person name="Dufosse-Laurent V."/>
            <person name="Ferron C."/>
            <person name="Lechaplais C."/>
            <person name="Louesse C."/>
            <person name="Muselet D."/>
            <person name="Magdelenat G."/>
            <person name="Pateau E."/>
            <person name="Petit E."/>
            <person name="Sirvain-Trukniewicz P."/>
            <person name="Trybou A."/>
            <person name="Vega-Czarny N."/>
            <person name="Bataille E."/>
            <person name="Bluet E."/>
            <person name="Bordelais I."/>
            <person name="Dubois M."/>
            <person name="Dumont C."/>
            <person name="Guerin T."/>
            <person name="Haffray S."/>
            <person name="Hammadi R."/>
            <person name="Muanga J."/>
            <person name="Pellouin V."/>
            <person name="Robert D."/>
            <person name="Wunderle E."/>
            <person name="Gauguet G."/>
            <person name="Roy A."/>
            <person name="Sainte-Marthe L."/>
            <person name="Verdier J."/>
            <person name="Verdier-Discala C."/>
            <person name="Hillier L.W."/>
            <person name="Fulton L."/>
            <person name="McPherson J."/>
            <person name="Matsuda F."/>
            <person name="Wilson R."/>
            <person name="Scarpelli C."/>
            <person name="Gyapay G."/>
            <person name="Wincker P."/>
            <person name="Saurin W."/>
            <person name="Quetier F."/>
            <person name="Waterston R."/>
            <person name="Hood L."/>
            <person name="Weissenbach J."/>
        </authorList>
    </citation>
    <scope>NUCLEOTIDE SEQUENCE [LARGE SCALE GENOMIC DNA]</scope>
</reference>
<reference key="3">
    <citation type="submission" date="2005-07" db="EMBL/GenBank/DDBJ databases">
        <authorList>
            <person name="Mural R.J."/>
            <person name="Istrail S."/>
            <person name="Sutton G.G."/>
            <person name="Florea L."/>
            <person name="Halpern A.L."/>
            <person name="Mobarry C.M."/>
            <person name="Lippert R."/>
            <person name="Walenz B."/>
            <person name="Shatkay H."/>
            <person name="Dew I."/>
            <person name="Miller J.R."/>
            <person name="Flanigan M.J."/>
            <person name="Edwards N.J."/>
            <person name="Bolanos R."/>
            <person name="Fasulo D."/>
            <person name="Halldorsson B.V."/>
            <person name="Hannenhalli S."/>
            <person name="Turner R."/>
            <person name="Yooseph S."/>
            <person name="Lu F."/>
            <person name="Nusskern D.R."/>
            <person name="Shue B.C."/>
            <person name="Zheng X.H."/>
            <person name="Zhong F."/>
            <person name="Delcher A.L."/>
            <person name="Huson D.H."/>
            <person name="Kravitz S.A."/>
            <person name="Mouchard L."/>
            <person name="Reinert K."/>
            <person name="Remington K.A."/>
            <person name="Clark A.G."/>
            <person name="Waterman M.S."/>
            <person name="Eichler E.E."/>
            <person name="Adams M.D."/>
            <person name="Hunkapiller M.W."/>
            <person name="Myers E.W."/>
            <person name="Venter J.C."/>
        </authorList>
    </citation>
    <scope>NUCLEOTIDE SEQUENCE [LARGE SCALE GENOMIC DNA]</scope>
    <scope>VARIANT ASN-8</scope>
</reference>
<reference key="4">
    <citation type="journal article" date="2004" name="Genome Res.">
        <title>The status, quality, and expansion of the NIH full-length cDNA project: the Mammalian Gene Collection (MGC).</title>
        <authorList>
            <consortium name="The MGC Project Team"/>
        </authorList>
    </citation>
    <scope>NUCLEOTIDE SEQUENCE [LARGE SCALE MRNA]</scope>
    <scope>VARIANT THR-57</scope>
    <source>
        <tissue evidence="9">Skin</tissue>
    </source>
</reference>
<feature type="initiator methionine" description="Removed" evidence="1">
    <location>
        <position position="1"/>
    </location>
</feature>
<feature type="chain" id="PRO_0000312816" description="Sphingolipid delta(4)-desaturase/C4-monooxygenase DES2" evidence="1">
    <location>
        <begin position="2"/>
        <end position="323"/>
    </location>
</feature>
<feature type="transmembrane region" description="Helical" evidence="3">
    <location>
        <begin position="45"/>
        <end position="65"/>
    </location>
</feature>
<feature type="transmembrane region" description="Helical" evidence="3">
    <location>
        <begin position="68"/>
        <end position="88"/>
    </location>
</feature>
<feature type="transmembrane region" description="Helical" evidence="3">
    <location>
        <begin position="210"/>
        <end position="231"/>
    </location>
</feature>
<feature type="region of interest" description="Required for C4-hydroxylase activity" evidence="2">
    <location>
        <begin position="95"/>
        <end position="99"/>
    </location>
</feature>
<feature type="short sequence motif" description="Histidine box-1" evidence="7">
    <location>
        <begin position="89"/>
        <end position="93"/>
    </location>
</feature>
<feature type="short sequence motif" description="Histidine box-2" evidence="7">
    <location>
        <begin position="128"/>
        <end position="132"/>
    </location>
</feature>
<feature type="short sequence motif" description="Histidine box-3" evidence="7">
    <location>
        <begin position="259"/>
        <end position="263"/>
    </location>
</feature>
<feature type="lipid moiety-binding region" description="N-myristoyl glycine" evidence="1">
    <location>
        <position position="2"/>
    </location>
</feature>
<feature type="sequence variant" id="VAR_060347" description="In dbSNP:rs7157599." evidence="4 6">
    <original>S</original>
    <variation>N</variation>
    <location>
        <position position="8"/>
    </location>
</feature>
<feature type="sequence variant" id="VAR_055698" description="In dbSNP:rs4905937." evidence="5">
    <original>A</original>
    <variation>T</variation>
    <location>
        <position position="57"/>
    </location>
</feature>
<dbReference type="EC" id="1.14.18.5" evidence="4"/>
<dbReference type="EC" id="1.14.19.17" evidence="4"/>
<dbReference type="EMBL" id="AY541700">
    <property type="protein sequence ID" value="AAS68362.1"/>
    <property type="molecule type" value="mRNA"/>
</dbReference>
<dbReference type="EMBL" id="AL133523">
    <property type="status" value="NOT_ANNOTATED_CDS"/>
    <property type="molecule type" value="Genomic_DNA"/>
</dbReference>
<dbReference type="EMBL" id="CH471061">
    <property type="protein sequence ID" value="EAW81688.1"/>
    <property type="molecule type" value="Genomic_DNA"/>
</dbReference>
<dbReference type="EMBL" id="BC063598">
    <property type="protein sequence ID" value="AAH63598.1"/>
    <property type="molecule type" value="mRNA"/>
</dbReference>
<dbReference type="CCDS" id="CCDS9956.1"/>
<dbReference type="RefSeq" id="NP_996801.2">
    <property type="nucleotide sequence ID" value="NM_206918.3"/>
</dbReference>
<dbReference type="BioGRID" id="125815">
    <property type="interactions" value="1"/>
</dbReference>
<dbReference type="FunCoup" id="Q6QHC5">
    <property type="interactions" value="486"/>
</dbReference>
<dbReference type="STRING" id="9606.ENSP00000307126"/>
<dbReference type="SwissLipids" id="SLP:000000170"/>
<dbReference type="iPTMnet" id="Q6QHC5"/>
<dbReference type="PhosphoSitePlus" id="Q6QHC5"/>
<dbReference type="BioMuta" id="DEGS2"/>
<dbReference type="DMDM" id="269849561"/>
<dbReference type="MassIVE" id="Q6QHC5"/>
<dbReference type="PaxDb" id="9606-ENSP00000307126"/>
<dbReference type="PeptideAtlas" id="Q6QHC5"/>
<dbReference type="ProteomicsDB" id="67288"/>
<dbReference type="Antibodypedia" id="54980">
    <property type="antibodies" value="78 antibodies from 14 providers"/>
</dbReference>
<dbReference type="DNASU" id="123099"/>
<dbReference type="Ensembl" id="ENST00000305631.7">
    <property type="protein sequence ID" value="ENSP00000307126.5"/>
    <property type="gene ID" value="ENSG00000168350.8"/>
</dbReference>
<dbReference type="GeneID" id="123099"/>
<dbReference type="KEGG" id="hsa:123099"/>
<dbReference type="MANE-Select" id="ENST00000305631.7">
    <property type="protein sequence ID" value="ENSP00000307126.5"/>
    <property type="RefSeq nucleotide sequence ID" value="NM_206918.3"/>
    <property type="RefSeq protein sequence ID" value="NP_996801.2"/>
</dbReference>
<dbReference type="UCSC" id="uc001ygx.3">
    <property type="organism name" value="human"/>
</dbReference>
<dbReference type="AGR" id="HGNC:20113"/>
<dbReference type="CTD" id="123099"/>
<dbReference type="DisGeNET" id="123099"/>
<dbReference type="GeneCards" id="DEGS2"/>
<dbReference type="HGNC" id="HGNC:20113">
    <property type="gene designation" value="DEGS2"/>
</dbReference>
<dbReference type="HPA" id="ENSG00000168350">
    <property type="expression patterns" value="Tissue enhanced (esophagus, intestine, skin)"/>
</dbReference>
<dbReference type="MIM" id="610862">
    <property type="type" value="gene"/>
</dbReference>
<dbReference type="neXtProt" id="NX_Q6QHC5"/>
<dbReference type="OpenTargets" id="ENSG00000168350"/>
<dbReference type="PharmGKB" id="PA134973300"/>
<dbReference type="VEuPathDB" id="HostDB:ENSG00000168350"/>
<dbReference type="eggNOG" id="KOG2987">
    <property type="taxonomic scope" value="Eukaryota"/>
</dbReference>
<dbReference type="GeneTree" id="ENSGT00390000013448"/>
<dbReference type="HOGENOM" id="CLU_032156_0_0_1"/>
<dbReference type="InParanoid" id="Q6QHC5"/>
<dbReference type="OMA" id="FEGWLFC"/>
<dbReference type="OrthoDB" id="200948at2759"/>
<dbReference type="PAN-GO" id="Q6QHC5">
    <property type="GO annotations" value="4 GO annotations based on evolutionary models"/>
</dbReference>
<dbReference type="PhylomeDB" id="Q6QHC5"/>
<dbReference type="TreeFam" id="TF313582"/>
<dbReference type="BioCyc" id="MetaCyc:HS15665-MONOMER"/>
<dbReference type="BRENDA" id="1.14.18.5">
    <property type="organism ID" value="2681"/>
</dbReference>
<dbReference type="PathwayCommons" id="Q6QHC5"/>
<dbReference type="Reactome" id="R-HSA-1660661">
    <property type="pathway name" value="Sphingolipid de novo biosynthesis"/>
</dbReference>
<dbReference type="UniPathway" id="UPA00786"/>
<dbReference type="BioGRID-ORCS" id="123099">
    <property type="hits" value="11 hits in 1151 CRISPR screens"/>
</dbReference>
<dbReference type="GenomeRNAi" id="123099"/>
<dbReference type="Pharos" id="Q6QHC5">
    <property type="development level" value="Tbio"/>
</dbReference>
<dbReference type="PRO" id="PR:Q6QHC5"/>
<dbReference type="Proteomes" id="UP000005640">
    <property type="component" value="Chromosome 14"/>
</dbReference>
<dbReference type="RNAct" id="Q6QHC5">
    <property type="molecule type" value="protein"/>
</dbReference>
<dbReference type="Bgee" id="ENSG00000168350">
    <property type="expression patterns" value="Expressed in upper arm skin and 150 other cell types or tissues"/>
</dbReference>
<dbReference type="ExpressionAtlas" id="Q6QHC5">
    <property type="expression patterns" value="baseline and differential"/>
</dbReference>
<dbReference type="GO" id="GO:0005789">
    <property type="term" value="C:endoplasmic reticulum membrane"/>
    <property type="evidence" value="ECO:0000304"/>
    <property type="project" value="Reactome"/>
</dbReference>
<dbReference type="GO" id="GO:0102772">
    <property type="term" value="F:sphingolipid C4-monooxygenase activity"/>
    <property type="evidence" value="ECO:0007669"/>
    <property type="project" value="UniProtKB-EC"/>
</dbReference>
<dbReference type="GO" id="GO:0042284">
    <property type="term" value="F:sphingolipid delta-4 desaturase activity"/>
    <property type="evidence" value="ECO:0000318"/>
    <property type="project" value="GO_Central"/>
</dbReference>
<dbReference type="GO" id="GO:0046513">
    <property type="term" value="P:ceramide biosynthetic process"/>
    <property type="evidence" value="ECO:0000318"/>
    <property type="project" value="GO_Central"/>
</dbReference>
<dbReference type="GO" id="GO:0006667">
    <property type="term" value="P:sphinganine metabolic process"/>
    <property type="evidence" value="ECO:0000318"/>
    <property type="project" value="GO_Central"/>
</dbReference>
<dbReference type="GO" id="GO:0030148">
    <property type="term" value="P:sphingolipid biosynthetic process"/>
    <property type="evidence" value="ECO:0000304"/>
    <property type="project" value="Reactome"/>
</dbReference>
<dbReference type="CDD" id="cd03508">
    <property type="entry name" value="Delta4-sphingolipid-FADS-like"/>
    <property type="match status" value="1"/>
</dbReference>
<dbReference type="InterPro" id="IPR011388">
    <property type="entry name" value="DES1/DES2"/>
</dbReference>
<dbReference type="InterPro" id="IPR005804">
    <property type="entry name" value="FA_desaturase_dom"/>
</dbReference>
<dbReference type="InterPro" id="IPR013866">
    <property type="entry name" value="Sphingolipid_d4-desaturase_N"/>
</dbReference>
<dbReference type="PANTHER" id="PTHR12879">
    <property type="entry name" value="SPHINGOLIPID DELTA 4 DESATURASE/C-4 HYDROXYLASE PROTEIN DES2"/>
    <property type="match status" value="1"/>
</dbReference>
<dbReference type="PANTHER" id="PTHR12879:SF21">
    <property type="entry name" value="SPHINGOLIPID DELTA(4)-DESATURASE_C4-MONOOXYGENASE DES2"/>
    <property type="match status" value="1"/>
</dbReference>
<dbReference type="Pfam" id="PF00487">
    <property type="entry name" value="FA_desaturase"/>
    <property type="match status" value="1"/>
</dbReference>
<dbReference type="Pfam" id="PF08557">
    <property type="entry name" value="Lipid_DES"/>
    <property type="match status" value="1"/>
</dbReference>
<dbReference type="PIRSF" id="PIRSF017228">
    <property type="entry name" value="Sphnglp_dlt4_des"/>
    <property type="match status" value="1"/>
</dbReference>
<dbReference type="SMART" id="SM01269">
    <property type="entry name" value="Lipid_DES"/>
    <property type="match status" value="1"/>
</dbReference>
<comment type="function">
    <text evidence="4">Bifunctional enzyme which acts both as a sphingolipid delta(4)-desaturase and a sphingolipid C4-monooxygenase.</text>
</comment>
<comment type="catalytic activity">
    <reaction evidence="4">
        <text>a dihydroceramide + 2 Fe(II)-[cytochrome b5] + O2 + 2 H(+) = a phytoceramide + 2 Fe(III)-[cytochrome b5] + H2O</text>
        <dbReference type="Rhea" id="RHEA:55808"/>
        <dbReference type="Rhea" id="RHEA-COMP:10438"/>
        <dbReference type="Rhea" id="RHEA-COMP:10439"/>
        <dbReference type="ChEBI" id="CHEBI:15377"/>
        <dbReference type="ChEBI" id="CHEBI:15378"/>
        <dbReference type="ChEBI" id="CHEBI:15379"/>
        <dbReference type="ChEBI" id="CHEBI:29033"/>
        <dbReference type="ChEBI" id="CHEBI:29034"/>
        <dbReference type="ChEBI" id="CHEBI:139048"/>
        <dbReference type="ChEBI" id="CHEBI:139051"/>
        <dbReference type="EC" id="1.14.18.5"/>
    </reaction>
</comment>
<comment type="catalytic activity">
    <reaction evidence="4">
        <text>an N-acylsphinganine + 2 Fe(II)-[cytochrome b5] + O2 + 2 H(+) = an N-acylsphing-4-enine + 2 Fe(III)-[cytochrome b5] + 2 H2O</text>
        <dbReference type="Rhea" id="RHEA:46544"/>
        <dbReference type="Rhea" id="RHEA-COMP:10438"/>
        <dbReference type="Rhea" id="RHEA-COMP:10439"/>
        <dbReference type="ChEBI" id="CHEBI:15377"/>
        <dbReference type="ChEBI" id="CHEBI:15378"/>
        <dbReference type="ChEBI" id="CHEBI:15379"/>
        <dbReference type="ChEBI" id="CHEBI:29033"/>
        <dbReference type="ChEBI" id="CHEBI:29034"/>
        <dbReference type="ChEBI" id="CHEBI:31488"/>
        <dbReference type="ChEBI" id="CHEBI:52639"/>
        <dbReference type="EC" id="1.14.19.17"/>
    </reaction>
</comment>
<comment type="catalytic activity">
    <reaction evidence="4">
        <text>N-octanoylsphinganine + 2 Fe(II)-[cytochrome b5] + O2 + 2 H(+) = N-octanoyl-4-hydroxysphinganine + 2 Fe(III)-[cytochrome b5] + H2O</text>
        <dbReference type="Rhea" id="RHEA:43116"/>
        <dbReference type="Rhea" id="RHEA-COMP:10438"/>
        <dbReference type="Rhea" id="RHEA-COMP:10439"/>
        <dbReference type="ChEBI" id="CHEBI:15377"/>
        <dbReference type="ChEBI" id="CHEBI:15378"/>
        <dbReference type="ChEBI" id="CHEBI:15379"/>
        <dbReference type="ChEBI" id="CHEBI:29033"/>
        <dbReference type="ChEBI" id="CHEBI:29034"/>
        <dbReference type="ChEBI" id="CHEBI:82841"/>
        <dbReference type="ChEBI" id="CHEBI:82842"/>
    </reaction>
    <physiologicalReaction direction="left-to-right" evidence="8">
        <dbReference type="Rhea" id="RHEA:43117"/>
    </physiologicalReaction>
</comment>
<comment type="catalytic activity">
    <reaction evidence="4">
        <text>an N-acylsphinganine + 2 Fe(II)-[cytochrome b5] + O2 + 2 H(+) = an N-acyl-(4R)-4-hydroxysphinganine + 2 Fe(III)-[cytochrome b5] + H2O</text>
        <dbReference type="Rhea" id="RHEA:46364"/>
        <dbReference type="Rhea" id="RHEA-COMP:10438"/>
        <dbReference type="Rhea" id="RHEA-COMP:10439"/>
        <dbReference type="ChEBI" id="CHEBI:15377"/>
        <dbReference type="ChEBI" id="CHEBI:15378"/>
        <dbReference type="ChEBI" id="CHEBI:15379"/>
        <dbReference type="ChEBI" id="CHEBI:29033"/>
        <dbReference type="ChEBI" id="CHEBI:29034"/>
        <dbReference type="ChEBI" id="CHEBI:31488"/>
        <dbReference type="ChEBI" id="CHEBI:31998"/>
        <dbReference type="EC" id="1.14.18.5"/>
    </reaction>
    <physiologicalReaction direction="left-to-right" evidence="8">
        <dbReference type="Rhea" id="RHEA:46365"/>
    </physiologicalReaction>
</comment>
<comment type="pathway">
    <text>Membrane lipid metabolism; sphingolipid biosynthesis.</text>
</comment>
<comment type="subcellular location">
    <subcellularLocation>
        <location evidence="2">Endoplasmic reticulum membrane</location>
        <topology evidence="2">Multi-pass membrane protein</topology>
    </subcellularLocation>
</comment>
<comment type="tissue specificity">
    <text evidence="4">Highly expressed in skin, intestine and kidney.</text>
</comment>
<comment type="induction">
    <text evidence="4">Up-regulated during keratinocyte differentiation. Not expressed at the beginning or day 3 after differentiation, detected on day 6 and increases by day 9.</text>
</comment>
<comment type="similarity">
    <text evidence="7">Belongs to the fatty acid desaturase type 1 family. DEGS subfamily.</text>
</comment>
<proteinExistence type="evidence at protein level"/>
<protein>
    <recommendedName>
        <fullName>Sphingolipid delta(4)-desaturase/C4-monooxygenase DES2</fullName>
        <ecNumber evidence="4">1.14.18.5</ecNumber>
        <ecNumber evidence="4">1.14.19.17</ecNumber>
    </recommendedName>
    <alternativeName>
        <fullName>Degenerative spermatocyte homolog 2</fullName>
    </alternativeName>
    <alternativeName>
        <fullName>Sphingolipid 4-desaturase</fullName>
    </alternativeName>
    <alternativeName>
        <fullName>Sphingolipid C4-monooxygenase</fullName>
    </alternativeName>
</protein>
<name>DEGS2_HUMAN</name>
<keyword id="KW-0256">Endoplasmic reticulum</keyword>
<keyword id="KW-0444">Lipid biosynthesis</keyword>
<keyword id="KW-0443">Lipid metabolism</keyword>
<keyword id="KW-0449">Lipoprotein</keyword>
<keyword id="KW-0472">Membrane</keyword>
<keyword id="KW-0519">Myristate</keyword>
<keyword id="KW-0560">Oxidoreductase</keyword>
<keyword id="KW-1267">Proteomics identification</keyword>
<keyword id="KW-1185">Reference proteome</keyword>
<keyword id="KW-0812">Transmembrane</keyword>
<keyword id="KW-1133">Transmembrane helix</keyword>
<accession>Q6QHC5</accession>
<accession>Q6P492</accession>
<organism>
    <name type="scientific">Homo sapiens</name>
    <name type="common">Human</name>
    <dbReference type="NCBI Taxonomy" id="9606"/>
    <lineage>
        <taxon>Eukaryota</taxon>
        <taxon>Metazoa</taxon>
        <taxon>Chordata</taxon>
        <taxon>Craniata</taxon>
        <taxon>Vertebrata</taxon>
        <taxon>Euteleostomi</taxon>
        <taxon>Mammalia</taxon>
        <taxon>Eutheria</taxon>
        <taxon>Euarchontoglires</taxon>
        <taxon>Primates</taxon>
        <taxon>Haplorrhini</taxon>
        <taxon>Catarrhini</taxon>
        <taxon>Hominidae</taxon>
        <taxon>Homo</taxon>
    </lineage>
</organism>
<evidence type="ECO:0000250" key="1">
    <source>
        <dbReference type="UniProtKB" id="Q564G3"/>
    </source>
</evidence>
<evidence type="ECO:0000250" key="2">
    <source>
        <dbReference type="UniProtKB" id="Q8R2F2"/>
    </source>
</evidence>
<evidence type="ECO:0000255" key="3"/>
<evidence type="ECO:0000269" key="4">
    <source>
    </source>
</evidence>
<evidence type="ECO:0000269" key="5">
    <source>
    </source>
</evidence>
<evidence type="ECO:0000269" key="6">
    <source ref="3"/>
</evidence>
<evidence type="ECO:0000305" key="7"/>
<evidence type="ECO:0000305" key="8">
    <source>
    </source>
</evidence>
<evidence type="ECO:0000312" key="9">
    <source>
        <dbReference type="EMBL" id="AAH63598.1"/>
    </source>
</evidence>
<evidence type="ECO:0000312" key="10">
    <source>
        <dbReference type="EMBL" id="AAS68362.1"/>
    </source>
</evidence>
<evidence type="ECO:0000312" key="11">
    <source>
        <dbReference type="HGNC" id="HGNC:20113"/>
    </source>
</evidence>